<protein>
    <recommendedName>
        <fullName evidence="1">Tryptophan synthase alpha chain</fullName>
        <ecNumber evidence="1">4.2.1.20</ecNumber>
    </recommendedName>
</protein>
<keyword id="KW-0028">Amino-acid biosynthesis</keyword>
<keyword id="KW-0057">Aromatic amino acid biosynthesis</keyword>
<keyword id="KW-0456">Lyase</keyword>
<keyword id="KW-0822">Tryptophan biosynthesis</keyword>
<name>TRPA_CHLAD</name>
<accession>B8G5G4</accession>
<dbReference type="EC" id="4.2.1.20" evidence="1"/>
<dbReference type="EMBL" id="CP001337">
    <property type="protein sequence ID" value="ACL25670.1"/>
    <property type="molecule type" value="Genomic_DNA"/>
</dbReference>
<dbReference type="RefSeq" id="WP_015941526.1">
    <property type="nucleotide sequence ID" value="NC_011831.1"/>
</dbReference>
<dbReference type="SMR" id="B8G5G4"/>
<dbReference type="STRING" id="326427.Cagg_2808"/>
<dbReference type="KEGG" id="cag:Cagg_2808"/>
<dbReference type="eggNOG" id="COG0159">
    <property type="taxonomic scope" value="Bacteria"/>
</dbReference>
<dbReference type="HOGENOM" id="CLU_016734_0_2_0"/>
<dbReference type="OrthoDB" id="9804578at2"/>
<dbReference type="UniPathway" id="UPA00035">
    <property type="reaction ID" value="UER00044"/>
</dbReference>
<dbReference type="Proteomes" id="UP000002508">
    <property type="component" value="Chromosome"/>
</dbReference>
<dbReference type="GO" id="GO:0005829">
    <property type="term" value="C:cytosol"/>
    <property type="evidence" value="ECO:0007669"/>
    <property type="project" value="TreeGrafter"/>
</dbReference>
<dbReference type="GO" id="GO:0004834">
    <property type="term" value="F:tryptophan synthase activity"/>
    <property type="evidence" value="ECO:0007669"/>
    <property type="project" value="UniProtKB-UniRule"/>
</dbReference>
<dbReference type="CDD" id="cd04724">
    <property type="entry name" value="Tryptophan_synthase_alpha"/>
    <property type="match status" value="1"/>
</dbReference>
<dbReference type="FunFam" id="3.20.20.70:FF:000037">
    <property type="entry name" value="Tryptophan synthase alpha chain"/>
    <property type="match status" value="1"/>
</dbReference>
<dbReference type="Gene3D" id="3.20.20.70">
    <property type="entry name" value="Aldolase class I"/>
    <property type="match status" value="1"/>
</dbReference>
<dbReference type="HAMAP" id="MF_00131">
    <property type="entry name" value="Trp_synth_alpha"/>
    <property type="match status" value="1"/>
</dbReference>
<dbReference type="InterPro" id="IPR013785">
    <property type="entry name" value="Aldolase_TIM"/>
</dbReference>
<dbReference type="InterPro" id="IPR011060">
    <property type="entry name" value="RibuloseP-bd_barrel"/>
</dbReference>
<dbReference type="InterPro" id="IPR002028">
    <property type="entry name" value="Trp_synthase_suA"/>
</dbReference>
<dbReference type="NCBIfam" id="TIGR00262">
    <property type="entry name" value="trpA"/>
    <property type="match status" value="1"/>
</dbReference>
<dbReference type="PANTHER" id="PTHR43406:SF1">
    <property type="entry name" value="TRYPTOPHAN SYNTHASE ALPHA CHAIN, CHLOROPLASTIC"/>
    <property type="match status" value="1"/>
</dbReference>
<dbReference type="PANTHER" id="PTHR43406">
    <property type="entry name" value="TRYPTOPHAN SYNTHASE, ALPHA CHAIN"/>
    <property type="match status" value="1"/>
</dbReference>
<dbReference type="Pfam" id="PF00290">
    <property type="entry name" value="Trp_syntA"/>
    <property type="match status" value="1"/>
</dbReference>
<dbReference type="SUPFAM" id="SSF51366">
    <property type="entry name" value="Ribulose-phoshate binding barrel"/>
    <property type="match status" value="1"/>
</dbReference>
<feature type="chain" id="PRO_1000198705" description="Tryptophan synthase alpha chain">
    <location>
        <begin position="1"/>
        <end position="267"/>
    </location>
</feature>
<feature type="active site" description="Proton acceptor" evidence="1">
    <location>
        <position position="49"/>
    </location>
</feature>
<feature type="active site" description="Proton acceptor" evidence="1">
    <location>
        <position position="60"/>
    </location>
</feature>
<evidence type="ECO:0000255" key="1">
    <source>
        <dbReference type="HAMAP-Rule" id="MF_00131"/>
    </source>
</evidence>
<reference key="1">
    <citation type="submission" date="2008-12" db="EMBL/GenBank/DDBJ databases">
        <title>Complete sequence of Chloroflexus aggregans DSM 9485.</title>
        <authorList>
            <consortium name="US DOE Joint Genome Institute"/>
            <person name="Lucas S."/>
            <person name="Copeland A."/>
            <person name="Lapidus A."/>
            <person name="Glavina del Rio T."/>
            <person name="Dalin E."/>
            <person name="Tice H."/>
            <person name="Pitluck S."/>
            <person name="Foster B."/>
            <person name="Larimer F."/>
            <person name="Land M."/>
            <person name="Hauser L."/>
            <person name="Kyrpides N."/>
            <person name="Mikhailova N."/>
            <person name="Bryant D.A."/>
            <person name="Richardson P."/>
        </authorList>
    </citation>
    <scope>NUCLEOTIDE SEQUENCE [LARGE SCALE GENOMIC DNA]</scope>
    <source>
        <strain>MD-66 / DSM 9485</strain>
    </source>
</reference>
<proteinExistence type="inferred from homology"/>
<organism>
    <name type="scientific">Chloroflexus aggregans (strain MD-66 / DSM 9485)</name>
    <dbReference type="NCBI Taxonomy" id="326427"/>
    <lineage>
        <taxon>Bacteria</taxon>
        <taxon>Bacillati</taxon>
        <taxon>Chloroflexota</taxon>
        <taxon>Chloroflexia</taxon>
        <taxon>Chloroflexales</taxon>
        <taxon>Chloroflexineae</taxon>
        <taxon>Chloroflexaceae</taxon>
        <taxon>Chloroflexus</taxon>
    </lineage>
</organism>
<gene>
    <name evidence="1" type="primary">trpA</name>
    <name type="ordered locus">Cagg_2808</name>
</gene>
<comment type="function">
    <text evidence="1">The alpha subunit is responsible for the aldol cleavage of indoleglycerol phosphate to indole and glyceraldehyde 3-phosphate.</text>
</comment>
<comment type="catalytic activity">
    <reaction evidence="1">
        <text>(1S,2R)-1-C-(indol-3-yl)glycerol 3-phosphate + L-serine = D-glyceraldehyde 3-phosphate + L-tryptophan + H2O</text>
        <dbReference type="Rhea" id="RHEA:10532"/>
        <dbReference type="ChEBI" id="CHEBI:15377"/>
        <dbReference type="ChEBI" id="CHEBI:33384"/>
        <dbReference type="ChEBI" id="CHEBI:57912"/>
        <dbReference type="ChEBI" id="CHEBI:58866"/>
        <dbReference type="ChEBI" id="CHEBI:59776"/>
        <dbReference type="EC" id="4.2.1.20"/>
    </reaction>
</comment>
<comment type="pathway">
    <text evidence="1">Amino-acid biosynthesis; L-tryptophan biosynthesis; L-tryptophan from chorismate: step 5/5.</text>
</comment>
<comment type="subunit">
    <text evidence="1">Tetramer of two alpha and two beta chains.</text>
</comment>
<comment type="similarity">
    <text evidence="1">Belongs to the TrpA family.</text>
</comment>
<sequence>MNRITETFARLRSSGRIALMPYLTVGFPERESTLELVPALEAAGASLFELGIPFSDPLADGATIQRATQRALENGVTIADCITTVAQLRARNVKAPLLLMGYYNPLLRYGLERACAELAAAGGDGWIIPDLPLEEAAELRPIAAAHHLDLIMFIAPTTPPTRITQIVAHASGFLYIVSLTGVTGARQTLAANLADLITTVRQQTDLPLVVGFGISQPSHVAEVARLADGAIVGSALIDRLERLAPSERVSGATAYIRELVSATERVH</sequence>